<evidence type="ECO:0000255" key="1"/>
<evidence type="ECO:0000255" key="2">
    <source>
        <dbReference type="PROSITE-ProRule" id="PRU00041"/>
    </source>
</evidence>
<evidence type="ECO:0000256" key="3">
    <source>
        <dbReference type="SAM" id="MobiDB-lite"/>
    </source>
</evidence>
<evidence type="ECO:0000269" key="4">
    <source>
    </source>
</evidence>
<evidence type="ECO:0000303" key="5">
    <source>
    </source>
</evidence>
<evidence type="ECO:0000305" key="6"/>
<evidence type="ECO:0000312" key="7">
    <source>
        <dbReference type="EMBL" id="EAR93381.2"/>
    </source>
</evidence>
<evidence type="ECO:0000312" key="8">
    <source>
        <dbReference type="Proteomes" id="UP000009168"/>
    </source>
</evidence>
<feature type="chain" id="PRO_0000461788" description="Ferlin 2">
    <location>
        <begin position="1"/>
        <end position="1703"/>
    </location>
</feature>
<feature type="transmembrane region" description="Helical" evidence="1">
    <location>
        <begin position="1681"/>
        <end position="1701"/>
    </location>
</feature>
<feature type="domain" description="C2 1" evidence="2">
    <location>
        <begin position="18"/>
        <end position="141"/>
    </location>
</feature>
<feature type="domain" description="C2 2" evidence="2">
    <location>
        <begin position="207"/>
        <end position="332"/>
    </location>
</feature>
<feature type="domain" description="C2 3" evidence="2">
    <location>
        <begin position="1466"/>
        <end position="1595"/>
    </location>
</feature>
<feature type="region of interest" description="Disordered" evidence="3">
    <location>
        <begin position="913"/>
        <end position="937"/>
    </location>
</feature>
<feature type="region of interest" description="Disordered" evidence="3">
    <location>
        <begin position="970"/>
        <end position="1025"/>
    </location>
</feature>
<feature type="region of interest" description="Disordered" evidence="3">
    <location>
        <begin position="1194"/>
        <end position="1228"/>
    </location>
</feature>
<feature type="region of interest" description="Disordered" evidence="3">
    <location>
        <begin position="1628"/>
        <end position="1651"/>
    </location>
</feature>
<feature type="compositionally biased region" description="Acidic residues" evidence="3">
    <location>
        <begin position="916"/>
        <end position="928"/>
    </location>
</feature>
<feature type="compositionally biased region" description="Polar residues" evidence="3">
    <location>
        <begin position="979"/>
        <end position="991"/>
    </location>
</feature>
<feature type="compositionally biased region" description="Basic and acidic residues" evidence="3">
    <location>
        <begin position="993"/>
        <end position="1009"/>
    </location>
</feature>
<feature type="compositionally biased region" description="Low complexity" evidence="3">
    <location>
        <begin position="1198"/>
        <end position="1209"/>
    </location>
</feature>
<feature type="compositionally biased region" description="Basic and acidic residues" evidence="3">
    <location>
        <begin position="1641"/>
        <end position="1651"/>
    </location>
</feature>
<organism evidence="8">
    <name type="scientific">Tetrahymena thermophila (strain SB210)</name>
    <dbReference type="NCBI Taxonomy" id="312017"/>
    <lineage>
        <taxon>Eukaryota</taxon>
        <taxon>Sar</taxon>
        <taxon>Alveolata</taxon>
        <taxon>Ciliophora</taxon>
        <taxon>Intramacronucleata</taxon>
        <taxon>Oligohymenophorea</taxon>
        <taxon>Hymenostomatida</taxon>
        <taxon>Tetrahymenina</taxon>
        <taxon>Tetrahymenidae</taxon>
        <taxon>Tetrahymena</taxon>
    </lineage>
</organism>
<gene>
    <name evidence="7" type="ORF">TTHERM_00886960</name>
</gene>
<name>FER2_TETTS</name>
<keyword id="KW-0268">Exocytosis</keyword>
<keyword id="KW-0472">Membrane</keyword>
<keyword id="KW-1185">Reference proteome</keyword>
<keyword id="KW-0677">Repeat</keyword>
<keyword id="KW-0812">Transmembrane</keyword>
<keyword id="KW-1133">Transmembrane helix</keyword>
<comment type="function">
    <text evidence="4">Regulates mucocyst exocytosis.</text>
</comment>
<comment type="subcellular location">
    <subcellularLocation>
        <location evidence="1">Membrane</location>
        <topology evidence="1">Single-pass membrane protein</topology>
    </subcellularLocation>
</comment>
<comment type="disruption phenotype">
    <text evidence="4">Gene knockout results in defects in mucocyst release when stimulated with the secretagogue dibucaine (PubMed:36245278). No significant effects on the biogenesis of mucocyst and their docking at the plasma membrane (PubMed:36245278).</text>
</comment>
<comment type="similarity">
    <text evidence="6">Belongs to the ferlin family.</text>
</comment>
<reference evidence="8" key="1">
    <citation type="journal article" date="2006" name="PLoS Biol.">
        <title>Macronuclear genome sequence of the ciliate Tetrahymena thermophila, a model eukaryote.</title>
        <authorList>
            <person name="Eisen J.A."/>
            <person name="Coyne R.S."/>
            <person name="Wu M."/>
            <person name="Wu D."/>
            <person name="Thiagarajan M."/>
            <person name="Wortman J.R."/>
            <person name="Badger J.H."/>
            <person name="Ren Q."/>
            <person name="Amedeo P."/>
            <person name="Jones K.M."/>
            <person name="Tallon L.J."/>
            <person name="Delcher A.L."/>
            <person name="Salzberg S.L."/>
            <person name="Silva J.C."/>
            <person name="Haas B.J."/>
            <person name="Majoros W.H."/>
            <person name="Farzad M."/>
            <person name="Carlton J.M."/>
            <person name="Smith R.K. Jr."/>
            <person name="Garg J."/>
            <person name="Pearlman R.E."/>
            <person name="Karrer K.M."/>
            <person name="Sun L."/>
            <person name="Manning G."/>
            <person name="Elde N.C."/>
            <person name="Turkewitz A.P."/>
            <person name="Asai D.J."/>
            <person name="Wilkes D.E."/>
            <person name="Wang Y."/>
            <person name="Cai H."/>
            <person name="Collins K."/>
            <person name="Stewart B.A."/>
            <person name="Lee S.R."/>
            <person name="Wilamowska K."/>
            <person name="Weinberg Z."/>
            <person name="Ruzzo W.L."/>
            <person name="Wloga D."/>
            <person name="Gaertig J."/>
            <person name="Frankel J."/>
            <person name="Tsao C.-C."/>
            <person name="Gorovsky M.A."/>
            <person name="Keeling P.J."/>
            <person name="Waller R.F."/>
            <person name="Patron N.J."/>
            <person name="Cherry J.M."/>
            <person name="Stover N.A."/>
            <person name="Krieger C.J."/>
            <person name="del Toro C."/>
            <person name="Ryder H.F."/>
            <person name="Williamson S.C."/>
            <person name="Barbeau R.A."/>
            <person name="Hamilton E.P."/>
            <person name="Orias E."/>
        </authorList>
    </citation>
    <scope>NUCLEOTIDE SEQUENCE [LARGE SCALE GENOMIC DNA]</scope>
    <source>
        <strain evidence="8">SB210</strain>
    </source>
</reference>
<reference evidence="6" key="2">
    <citation type="journal article" date="2022" name="EMBO J.">
        <title>An apical membrane complex for triggering rhoptry exocytosis and invasion in Toxoplasma.</title>
        <authorList>
            <person name="Sparvoli D."/>
            <person name="Delabre J."/>
            <person name="Penarete-Vargas D.M."/>
            <person name="Kumar Mageswaran S."/>
            <person name="Tsypin L.M."/>
            <person name="Heckendorn J."/>
            <person name="Theveny L."/>
            <person name="Maynadier M."/>
            <person name="Mendonca Cova M."/>
            <person name="Berry-Sterkers L."/>
            <person name="Guerin A."/>
            <person name="Dubremetz J.F."/>
            <person name="Urbach S."/>
            <person name="Striepen B."/>
            <person name="Turkewitz A.P."/>
            <person name="Chang Y.W."/>
            <person name="Lebrun M."/>
        </authorList>
    </citation>
    <scope>FUNCTION</scope>
    <scope>DISRUPTION PHENOTYPE</scope>
</reference>
<proteinExistence type="inferred from homology"/>
<protein>
    <recommendedName>
        <fullName evidence="5">Ferlin 2</fullName>
        <shortName evidence="5">TtFer2</shortName>
    </recommendedName>
</protein>
<sequence>MAQIASGVNEIKSNLGDIRKLINQNAQYDQKKEYQVQVTIIEARGLIAKDADGSDPYVKIFVGKLPPQVTNTKSNASTVVFNQSFTFKDLFLNQIELENQEITLQVIDQNQFATNPLIGQQSIGLSTLYRSNNHEFFKTWLTLIHPDQGIEPQGYLLVSCYIIGTEDRPPVHDINEAKEDDDDGCSFLNIPDEELNDEQRKKKAIWKQPVVPINMPLNKREQYQLLVSIVKGEDLPILTGSTCDSFIACRVGSNVLRTMTVKNSQKPNFQTKMVFPVFFPVYNDKIVIRVWDSRTLRSDNFIAAIPEKPNENDWFNINTLHSRGGTMSFRWFHLYGVPLPERPEGMIDEVVKKLTKQVEGTMYMGRILLSLSLSPNEKAELGLQSLGGYKEPPILKYIIRCDTFELQSSFDCGQYIMIEINFGGQVIRSNLCQKRVDSHEKQKNNQQSSRTRELNQYIWKDSKSQIKDELQIDIPFDQSQQPDVIVSLYSVTPNKKTLDYDVGDMKRQAYIRIKPTSRELEHEQPKWYQLKPVKYKTIQEVHSHLLMNVELKTEMVAKQKTRHPIKRSLKQMYQFKGYLWGGYDLLPSHHSDDTCIKAQLQIGTRIIDVVTGRKGKNVIWNHSLEFLIELDEKLEFSSNILVSFYNKKSSDEEFIGQIAIKAVACEVKIDNKQINIPPPKPKYQFYHIVQEGKSNGRILAAFQLQRSEKTFNQNNDVNEPKYDKILKDQDFKYVQVKFPLIGVRNLPEGIRDPEFVFRIPQPDLKFVITLEERKQRKELTRNYYYEKIITLKNNEEEQEQAEQKKTIGGKIFTMIAEQQKVALKNINFCTILENDISECLKIPVDLQFTPILELEIRDRAAAIKTVRYHSSISLIDYIPWGDVGTKNAKIEFFEIGKLNLMLLQDEDQDAVQNQFNDDDEGDNEDEQDSRENDFDDNRDANLIFTEQFREEVDQQNQNSDDKRRLLSNKNLDKLDGDDQPQSLKNLQNLDSLSKADQKSQFDLKSESKSRATGKTKTSKKSTSSTARKLLLQQKLFESTQTFFNAEFNPSVEFTKSLIDEANFKLEREQKIQKLADLVFELKKMKKKDEGREKQLLREIEDLKNYLVKENIFLEQGDDGAQENFDYGREIVRVPLQDQLEKGLPYKKFRLYMYGNNTHDIGIPTAAVIKAHLKVLEHDIEIIKQRKTQIRETLKNKSNRSSMSLSMRSSIQSNTFKSSRKTSRSQKLGENKPLVSYECEGDDQRFPFDIFKKTFLEFFQKQFELKTRVYLLRCTNISAQASKIEAYHLLAGEAAVCSASSYPWVIVGDGENRGKNIIKNIKDDANIAVDTLNPEFFKMYELDATLPEDWNLVVKIMNKGTAIDALIGQFEIDLEDRVLGQKELRRRIAYQTYIEYFREKCEQYKYNYEIGDKKKNYEIKINELITKIEALDRNLKLPVEYLELKHPEKNTCQGTIEFFLEPFPFDVARIIPPSTIEKPQPMEFEIRLIIWETFDIPISNPIQKSTVDIFLTVSLDSTANIKGEEIVKETDVHFGSENGNGVFNYRMVFPLVIPCSFPRLRLQVSDFSTVGSNESLGETVITLRKALKKLKEGIVFQMPTTKFKFEHPNYPGQDRGCVSISMKIINKQAAESDPVGEGQNEPNKDPILEKPKEGRNVGDFLKGTALDFSAWSFFGLTALKYFAGIFVSIVTMMILFVKPGILVN</sequence>
<accession>Q239Y2</accession>
<dbReference type="EMBL" id="GG662856">
    <property type="protein sequence ID" value="EAR93381.2"/>
    <property type="molecule type" value="Genomic_DNA"/>
</dbReference>
<dbReference type="RefSeq" id="XP_001013626.2">
    <property type="nucleotide sequence ID" value="XM_001013626.3"/>
</dbReference>
<dbReference type="EnsemblProtists" id="EAR93381">
    <property type="protein sequence ID" value="EAR93381"/>
    <property type="gene ID" value="TTHERM_00886960"/>
</dbReference>
<dbReference type="GeneID" id="7827037"/>
<dbReference type="KEGG" id="tet:TTHERM_00886960"/>
<dbReference type="eggNOG" id="KOG1326">
    <property type="taxonomic scope" value="Eukaryota"/>
</dbReference>
<dbReference type="HOGENOM" id="CLU_235854_0_0_1"/>
<dbReference type="InParanoid" id="Q239Y2"/>
<dbReference type="OrthoDB" id="270970at2759"/>
<dbReference type="Proteomes" id="UP000009168">
    <property type="component" value="Unassembled WGS sequence"/>
</dbReference>
<dbReference type="GO" id="GO:0016020">
    <property type="term" value="C:membrane"/>
    <property type="evidence" value="ECO:0007669"/>
    <property type="project" value="UniProtKB-SubCell"/>
</dbReference>
<dbReference type="GO" id="GO:0006887">
    <property type="term" value="P:exocytosis"/>
    <property type="evidence" value="ECO:0007669"/>
    <property type="project" value="UniProtKB-KW"/>
</dbReference>
<dbReference type="GO" id="GO:0007009">
    <property type="term" value="P:plasma membrane organization"/>
    <property type="evidence" value="ECO:0007669"/>
    <property type="project" value="TreeGrafter"/>
</dbReference>
<dbReference type="CDD" id="cd00030">
    <property type="entry name" value="C2"/>
    <property type="match status" value="2"/>
</dbReference>
<dbReference type="Gene3D" id="2.60.40.150">
    <property type="entry name" value="C2 domain"/>
    <property type="match status" value="3"/>
</dbReference>
<dbReference type="InterPro" id="IPR000008">
    <property type="entry name" value="C2_dom"/>
</dbReference>
<dbReference type="InterPro" id="IPR035892">
    <property type="entry name" value="C2_domain_sf"/>
</dbReference>
<dbReference type="InterPro" id="IPR012968">
    <property type="entry name" value="FerIin_dom"/>
</dbReference>
<dbReference type="InterPro" id="IPR037721">
    <property type="entry name" value="Ferlin"/>
</dbReference>
<dbReference type="PANTHER" id="PTHR12546">
    <property type="entry name" value="FER-1-LIKE"/>
    <property type="match status" value="1"/>
</dbReference>
<dbReference type="PANTHER" id="PTHR12546:SF33">
    <property type="entry name" value="SPERM VESICLE FUSION PROTEIN FER-1"/>
    <property type="match status" value="1"/>
</dbReference>
<dbReference type="Pfam" id="PF00168">
    <property type="entry name" value="C2"/>
    <property type="match status" value="5"/>
</dbReference>
<dbReference type="SMART" id="SM00239">
    <property type="entry name" value="C2"/>
    <property type="match status" value="5"/>
</dbReference>
<dbReference type="SMART" id="SM01202">
    <property type="entry name" value="FerI"/>
    <property type="match status" value="1"/>
</dbReference>
<dbReference type="SUPFAM" id="SSF49562">
    <property type="entry name" value="C2 domain (Calcium/lipid-binding domain, CaLB)"/>
    <property type="match status" value="4"/>
</dbReference>
<dbReference type="PROSITE" id="PS50004">
    <property type="entry name" value="C2"/>
    <property type="match status" value="3"/>
</dbReference>